<evidence type="ECO:0000255" key="1">
    <source>
        <dbReference type="HAMAP-Rule" id="MF_00218"/>
    </source>
</evidence>
<keyword id="KW-0963">Cytoplasm</keyword>
<keyword id="KW-0210">Decarboxylase</keyword>
<keyword id="KW-0456">Lyase</keyword>
<keyword id="KW-0627">Porphyrin biosynthesis</keyword>
<keyword id="KW-1185">Reference proteome</keyword>
<comment type="function">
    <text evidence="1">Catalyzes the decarboxylation of four acetate groups of uroporphyrinogen-III to yield coproporphyrinogen-III.</text>
</comment>
<comment type="catalytic activity">
    <reaction evidence="1">
        <text>uroporphyrinogen III + 4 H(+) = coproporphyrinogen III + 4 CO2</text>
        <dbReference type="Rhea" id="RHEA:19865"/>
        <dbReference type="ChEBI" id="CHEBI:15378"/>
        <dbReference type="ChEBI" id="CHEBI:16526"/>
        <dbReference type="ChEBI" id="CHEBI:57308"/>
        <dbReference type="ChEBI" id="CHEBI:57309"/>
        <dbReference type="EC" id="4.1.1.37"/>
    </reaction>
</comment>
<comment type="pathway">
    <text evidence="1">Porphyrin-containing compound metabolism; protoporphyrin-IX biosynthesis; coproporphyrinogen-III from 5-aminolevulinate: step 4/4.</text>
</comment>
<comment type="subunit">
    <text evidence="1">Homodimer.</text>
</comment>
<comment type="subcellular location">
    <subcellularLocation>
        <location evidence="1">Cytoplasm</location>
    </subcellularLocation>
</comment>
<comment type="similarity">
    <text evidence="1">Belongs to the uroporphyrinogen decarboxylase family.</text>
</comment>
<organism>
    <name type="scientific">Pseudomonas syringae pv. tomato (strain ATCC BAA-871 / DC3000)</name>
    <dbReference type="NCBI Taxonomy" id="223283"/>
    <lineage>
        <taxon>Bacteria</taxon>
        <taxon>Pseudomonadati</taxon>
        <taxon>Pseudomonadota</taxon>
        <taxon>Gammaproteobacteria</taxon>
        <taxon>Pseudomonadales</taxon>
        <taxon>Pseudomonadaceae</taxon>
        <taxon>Pseudomonas</taxon>
    </lineage>
</organism>
<proteinExistence type="inferred from homology"/>
<feature type="chain" id="PRO_0000187628" description="Uroporphyrinogen decarboxylase">
    <location>
        <begin position="1"/>
        <end position="354"/>
    </location>
</feature>
<feature type="binding site" evidence="1">
    <location>
        <begin position="27"/>
        <end position="31"/>
    </location>
    <ligand>
        <name>substrate</name>
    </ligand>
</feature>
<feature type="binding site" evidence="1">
    <location>
        <position position="46"/>
    </location>
    <ligand>
        <name>substrate</name>
    </ligand>
</feature>
<feature type="binding site" evidence="1">
    <location>
        <position position="77"/>
    </location>
    <ligand>
        <name>substrate</name>
    </ligand>
</feature>
<feature type="binding site" evidence="1">
    <location>
        <position position="154"/>
    </location>
    <ligand>
        <name>substrate</name>
    </ligand>
</feature>
<feature type="binding site" evidence="1">
    <location>
        <position position="209"/>
    </location>
    <ligand>
        <name>substrate</name>
    </ligand>
</feature>
<feature type="binding site" evidence="1">
    <location>
        <position position="327"/>
    </location>
    <ligand>
        <name>substrate</name>
    </ligand>
</feature>
<feature type="site" description="Transition state stabilizer" evidence="1">
    <location>
        <position position="77"/>
    </location>
</feature>
<sequence>MTALKNDRFLRALLKQPVDVTPVWMMRQAGRYLPEYRASRASAGDFMSLCKNPQFACEVTLQPLDRYPLDAAILFSDILTIPDAMGLGLYFETGEGPRFKKTVSTLADIEALPIPDAQQDLGYVMDAVSTIRRELNGRVPLIGFAGSPWTLATYMVEGGSSKDFRKSKAMLYDNPQAMHLLLDKLAQSVTSYLNGQILAGAQAVQIFDSWGGSLSSAAYQEFSLAYMRKIVNGLIRENDGRKVPVIVFTKGGGLWLESIAEIGADTLGLDWTCDIGEARQRVGNKVSLQGNMDPTVLYARPEAIRQEVARILASYGSGTGHVFNLGHGITPEVDPANAGAFINAVHELSAQYHQ</sequence>
<dbReference type="EC" id="4.1.1.37" evidence="1"/>
<dbReference type="EMBL" id="AE016853">
    <property type="protein sequence ID" value="AAO58545.1"/>
    <property type="molecule type" value="Genomic_DNA"/>
</dbReference>
<dbReference type="RefSeq" id="NP_794850.1">
    <property type="nucleotide sequence ID" value="NC_004578.1"/>
</dbReference>
<dbReference type="RefSeq" id="WP_005765484.1">
    <property type="nucleotide sequence ID" value="NC_004578.1"/>
</dbReference>
<dbReference type="SMR" id="Q87V23"/>
<dbReference type="STRING" id="223283.PSPTO_5118"/>
<dbReference type="GeneID" id="1186803"/>
<dbReference type="KEGG" id="pst:PSPTO_5118"/>
<dbReference type="PATRIC" id="fig|223283.9.peg.5239"/>
<dbReference type="eggNOG" id="COG0407">
    <property type="taxonomic scope" value="Bacteria"/>
</dbReference>
<dbReference type="HOGENOM" id="CLU_040933_0_0_6"/>
<dbReference type="OrthoDB" id="9806656at2"/>
<dbReference type="PhylomeDB" id="Q87V23"/>
<dbReference type="UniPathway" id="UPA00251">
    <property type="reaction ID" value="UER00321"/>
</dbReference>
<dbReference type="Proteomes" id="UP000002515">
    <property type="component" value="Chromosome"/>
</dbReference>
<dbReference type="GO" id="GO:0005829">
    <property type="term" value="C:cytosol"/>
    <property type="evidence" value="ECO:0007669"/>
    <property type="project" value="TreeGrafter"/>
</dbReference>
<dbReference type="GO" id="GO:0004853">
    <property type="term" value="F:uroporphyrinogen decarboxylase activity"/>
    <property type="evidence" value="ECO:0007669"/>
    <property type="project" value="UniProtKB-UniRule"/>
</dbReference>
<dbReference type="GO" id="GO:0019353">
    <property type="term" value="P:protoporphyrinogen IX biosynthetic process from glutamate"/>
    <property type="evidence" value="ECO:0007669"/>
    <property type="project" value="TreeGrafter"/>
</dbReference>
<dbReference type="CDD" id="cd00717">
    <property type="entry name" value="URO-D"/>
    <property type="match status" value="1"/>
</dbReference>
<dbReference type="FunFam" id="3.20.20.210:FF:000001">
    <property type="entry name" value="Uroporphyrinogen decarboxylase"/>
    <property type="match status" value="1"/>
</dbReference>
<dbReference type="Gene3D" id="3.20.20.210">
    <property type="match status" value="1"/>
</dbReference>
<dbReference type="HAMAP" id="MF_00218">
    <property type="entry name" value="URO_D"/>
    <property type="match status" value="1"/>
</dbReference>
<dbReference type="InterPro" id="IPR038071">
    <property type="entry name" value="UROD/MetE-like_sf"/>
</dbReference>
<dbReference type="InterPro" id="IPR006361">
    <property type="entry name" value="Uroporphyrinogen_deCO2ase_HemE"/>
</dbReference>
<dbReference type="InterPro" id="IPR000257">
    <property type="entry name" value="Uroporphyrinogen_deCOase"/>
</dbReference>
<dbReference type="NCBIfam" id="TIGR01464">
    <property type="entry name" value="hemE"/>
    <property type="match status" value="1"/>
</dbReference>
<dbReference type="PANTHER" id="PTHR21091">
    <property type="entry name" value="METHYLTETRAHYDROFOLATE:HOMOCYSTEINE METHYLTRANSFERASE RELATED"/>
    <property type="match status" value="1"/>
</dbReference>
<dbReference type="PANTHER" id="PTHR21091:SF169">
    <property type="entry name" value="UROPORPHYRINOGEN DECARBOXYLASE"/>
    <property type="match status" value="1"/>
</dbReference>
<dbReference type="Pfam" id="PF01208">
    <property type="entry name" value="URO-D"/>
    <property type="match status" value="1"/>
</dbReference>
<dbReference type="SUPFAM" id="SSF51726">
    <property type="entry name" value="UROD/MetE-like"/>
    <property type="match status" value="1"/>
</dbReference>
<dbReference type="PROSITE" id="PS00906">
    <property type="entry name" value="UROD_1"/>
    <property type="match status" value="1"/>
</dbReference>
<dbReference type="PROSITE" id="PS00907">
    <property type="entry name" value="UROD_2"/>
    <property type="match status" value="1"/>
</dbReference>
<gene>
    <name evidence="1" type="primary">hemE</name>
    <name type="ordered locus">PSPTO_5118</name>
</gene>
<accession>Q87V23</accession>
<protein>
    <recommendedName>
        <fullName evidence="1">Uroporphyrinogen decarboxylase</fullName>
        <shortName evidence="1">UPD</shortName>
        <shortName evidence="1">URO-D</shortName>
        <ecNumber evidence="1">4.1.1.37</ecNumber>
    </recommendedName>
</protein>
<reference key="1">
    <citation type="journal article" date="2003" name="Proc. Natl. Acad. Sci. U.S.A.">
        <title>The complete genome sequence of the Arabidopsis and tomato pathogen Pseudomonas syringae pv. tomato DC3000.</title>
        <authorList>
            <person name="Buell C.R."/>
            <person name="Joardar V."/>
            <person name="Lindeberg M."/>
            <person name="Selengut J."/>
            <person name="Paulsen I.T."/>
            <person name="Gwinn M.L."/>
            <person name="Dodson R.J."/>
            <person name="DeBoy R.T."/>
            <person name="Durkin A.S."/>
            <person name="Kolonay J.F."/>
            <person name="Madupu R."/>
            <person name="Daugherty S.C."/>
            <person name="Brinkac L.M."/>
            <person name="Beanan M.J."/>
            <person name="Haft D.H."/>
            <person name="Nelson W.C."/>
            <person name="Davidsen T.M."/>
            <person name="Zafar N."/>
            <person name="Zhou L."/>
            <person name="Liu J."/>
            <person name="Yuan Q."/>
            <person name="Khouri H.M."/>
            <person name="Fedorova N.B."/>
            <person name="Tran B."/>
            <person name="Russell D."/>
            <person name="Berry K.J."/>
            <person name="Utterback T.R."/>
            <person name="Van Aken S.E."/>
            <person name="Feldblyum T.V."/>
            <person name="D'Ascenzo M."/>
            <person name="Deng W.-L."/>
            <person name="Ramos A.R."/>
            <person name="Alfano J.R."/>
            <person name="Cartinhour S."/>
            <person name="Chatterjee A.K."/>
            <person name="Delaney T.P."/>
            <person name="Lazarowitz S.G."/>
            <person name="Martin G.B."/>
            <person name="Schneider D.J."/>
            <person name="Tang X."/>
            <person name="Bender C.L."/>
            <person name="White O."/>
            <person name="Fraser C.M."/>
            <person name="Collmer A."/>
        </authorList>
    </citation>
    <scope>NUCLEOTIDE SEQUENCE [LARGE SCALE GENOMIC DNA]</scope>
    <source>
        <strain>ATCC BAA-871 / DC3000</strain>
    </source>
</reference>
<name>DCUP_PSESM</name>